<organism>
    <name type="scientific">Synechocystis sp. (strain ATCC 27184 / PCC 6803 / Kazusa)</name>
    <dbReference type="NCBI Taxonomy" id="1111708"/>
    <lineage>
        <taxon>Bacteria</taxon>
        <taxon>Bacillati</taxon>
        <taxon>Cyanobacteriota</taxon>
        <taxon>Cyanophyceae</taxon>
        <taxon>Synechococcales</taxon>
        <taxon>Merismopediaceae</taxon>
        <taxon>Synechocystis</taxon>
    </lineage>
</organism>
<reference key="1">
    <citation type="journal article" date="1996" name="DNA Res.">
        <title>Sequence analysis of the genome of the unicellular cyanobacterium Synechocystis sp. strain PCC6803. II. Sequence determination of the entire genome and assignment of potential protein-coding regions.</title>
        <authorList>
            <person name="Kaneko T."/>
            <person name="Sato S."/>
            <person name="Kotani H."/>
            <person name="Tanaka A."/>
            <person name="Asamizu E."/>
            <person name="Nakamura Y."/>
            <person name="Miyajima N."/>
            <person name="Hirosawa M."/>
            <person name="Sugiura M."/>
            <person name="Sasamoto S."/>
            <person name="Kimura T."/>
            <person name="Hosouchi T."/>
            <person name="Matsuno A."/>
            <person name="Muraki A."/>
            <person name="Nakazaki N."/>
            <person name="Naruo K."/>
            <person name="Okumura S."/>
            <person name="Shimpo S."/>
            <person name="Takeuchi C."/>
            <person name="Wada T."/>
            <person name="Watanabe A."/>
            <person name="Yamada M."/>
            <person name="Yasuda M."/>
            <person name="Tabata S."/>
        </authorList>
    </citation>
    <scope>NUCLEOTIDE SEQUENCE [LARGE SCALE GENOMIC DNA]</scope>
    <source>
        <strain>ATCC 27184 / PCC 6803 / Kazusa</strain>
    </source>
</reference>
<accession>Q55505</accession>
<evidence type="ECO:0000255" key="1">
    <source>
        <dbReference type="HAMAP-Rule" id="MF_01152"/>
    </source>
</evidence>
<protein>
    <recommendedName>
        <fullName evidence="1">Chaperone protein DnaJ 1</fullName>
    </recommendedName>
</protein>
<comment type="function">
    <text evidence="1">Participates actively in the response to hyperosmotic and heat shock by preventing the aggregation of stress-denatured proteins and by disaggregating proteins, also in an autonomous, DnaK-independent fashion. Unfolded proteins bind initially to DnaJ; upon interaction with the DnaJ-bound protein, DnaK hydrolyzes its bound ATP, resulting in the formation of a stable complex. GrpE releases ADP from DnaK; ATP binding to DnaK triggers the release of the substrate protein, thus completing the reaction cycle. Several rounds of ATP-dependent interactions between DnaJ, DnaK and GrpE are required for fully efficient folding. Also involved, together with DnaK and GrpE, in the DNA replication of plasmids through activation of initiation proteins.</text>
</comment>
<comment type="cofactor">
    <cofactor evidence="1">
        <name>Zn(2+)</name>
        <dbReference type="ChEBI" id="CHEBI:29105"/>
    </cofactor>
    <text evidence="1">Binds 2 Zn(2+) ions per monomer.</text>
</comment>
<comment type="subunit">
    <text evidence="1">Homodimer.</text>
</comment>
<comment type="subcellular location">
    <subcellularLocation>
        <location evidence="1">Cytoplasm</location>
    </subcellularLocation>
</comment>
<comment type="domain">
    <text evidence="1">The J domain is necessary and sufficient to stimulate DnaK ATPase activity. Zinc center 1 plays an important role in the autonomous, DnaK-independent chaperone activity of DnaJ. Zinc center 2 is essential for interaction with DnaK and for DnaJ activity.</text>
</comment>
<comment type="similarity">
    <text evidence="1">Belongs to the DnaJ family.</text>
</comment>
<name>DNAJ1_SYNY3</name>
<sequence length="377" mass="40794">MPGDYYQTLGVTRDADKDEIKRAYRRLARKYHPDVNKEPGAEEKFKEINRAYEVLSEPEIRQRYDQFGEAGVSGGGAQGFDVGNMGDFADIFETIFGGFGGGMGGQQRGRRRANGPTRGDDLRLDLQLTFQEAIFGGEKEIRIPHLESCQVCEGTGAKPGTGVKTCGTCNGAGQVRRATRTPFGSFAQVSACPTCNGSGEVIEQKCEACNGVGRKQETKKLKITIPAGVDDGTRLRVGKEGDAGLRGGPAGDLYVFLMVETDKHFVREGMNIRSNLEVSYLQAILGCRLEVDTVDGKAELTIPAGTQPNTVLTLENKGVPKLGNATIRGDHLITVKVQIPTRINSEERELLERLATIKGESHGKGGLEGFLGGLFHK</sequence>
<feature type="chain" id="PRO_0000070915" description="Chaperone protein DnaJ 1">
    <location>
        <begin position="1"/>
        <end position="377"/>
    </location>
</feature>
<feature type="domain" description="J" evidence="1">
    <location>
        <begin position="4"/>
        <end position="68"/>
    </location>
</feature>
<feature type="repeat" description="CXXCXGXG motif">
    <location>
        <begin position="149"/>
        <end position="156"/>
    </location>
</feature>
<feature type="repeat" description="CXXCXGXG motif">
    <location>
        <begin position="166"/>
        <end position="173"/>
    </location>
</feature>
<feature type="repeat" description="CXXCXGXG motif">
    <location>
        <begin position="192"/>
        <end position="199"/>
    </location>
</feature>
<feature type="repeat" description="CXXCXGXG motif">
    <location>
        <begin position="206"/>
        <end position="213"/>
    </location>
</feature>
<feature type="zinc finger region" description="CR-type" evidence="1">
    <location>
        <begin position="136"/>
        <end position="218"/>
    </location>
</feature>
<feature type="binding site" evidence="1">
    <location>
        <position position="149"/>
    </location>
    <ligand>
        <name>Zn(2+)</name>
        <dbReference type="ChEBI" id="CHEBI:29105"/>
        <label>1</label>
    </ligand>
</feature>
<feature type="binding site" evidence="1">
    <location>
        <position position="152"/>
    </location>
    <ligand>
        <name>Zn(2+)</name>
        <dbReference type="ChEBI" id="CHEBI:29105"/>
        <label>1</label>
    </ligand>
</feature>
<feature type="binding site" evidence="1">
    <location>
        <position position="166"/>
    </location>
    <ligand>
        <name>Zn(2+)</name>
        <dbReference type="ChEBI" id="CHEBI:29105"/>
        <label>2</label>
    </ligand>
</feature>
<feature type="binding site" evidence="1">
    <location>
        <position position="169"/>
    </location>
    <ligand>
        <name>Zn(2+)</name>
        <dbReference type="ChEBI" id="CHEBI:29105"/>
        <label>2</label>
    </ligand>
</feature>
<feature type="binding site" evidence="1">
    <location>
        <position position="192"/>
    </location>
    <ligand>
        <name>Zn(2+)</name>
        <dbReference type="ChEBI" id="CHEBI:29105"/>
        <label>2</label>
    </ligand>
</feature>
<feature type="binding site" evidence="1">
    <location>
        <position position="195"/>
    </location>
    <ligand>
        <name>Zn(2+)</name>
        <dbReference type="ChEBI" id="CHEBI:29105"/>
        <label>2</label>
    </ligand>
</feature>
<feature type="binding site" evidence="1">
    <location>
        <position position="206"/>
    </location>
    <ligand>
        <name>Zn(2+)</name>
        <dbReference type="ChEBI" id="CHEBI:29105"/>
        <label>1</label>
    </ligand>
</feature>
<feature type="binding site" evidence="1">
    <location>
        <position position="209"/>
    </location>
    <ligand>
        <name>Zn(2+)</name>
        <dbReference type="ChEBI" id="CHEBI:29105"/>
        <label>1</label>
    </ligand>
</feature>
<proteinExistence type="inferred from homology"/>
<gene>
    <name evidence="1" type="primary">dnaJ1</name>
    <name type="ordered locus">sll0897</name>
</gene>
<dbReference type="EMBL" id="BA000022">
    <property type="protein sequence ID" value="BAA10860.1"/>
    <property type="molecule type" value="Genomic_DNA"/>
</dbReference>
<dbReference type="PIR" id="S76013">
    <property type="entry name" value="S76013"/>
</dbReference>
<dbReference type="SMR" id="Q55505"/>
<dbReference type="FunCoup" id="Q55505">
    <property type="interactions" value="479"/>
</dbReference>
<dbReference type="IntAct" id="Q55505">
    <property type="interactions" value="2"/>
</dbReference>
<dbReference type="STRING" id="1148.gene:10500366"/>
<dbReference type="PaxDb" id="1148-1001370"/>
<dbReference type="EnsemblBacteria" id="BAA10860">
    <property type="protein sequence ID" value="BAA10860"/>
    <property type="gene ID" value="BAA10860"/>
</dbReference>
<dbReference type="KEGG" id="syn:sll0897"/>
<dbReference type="eggNOG" id="COG0484">
    <property type="taxonomic scope" value="Bacteria"/>
</dbReference>
<dbReference type="InParanoid" id="Q55505"/>
<dbReference type="PhylomeDB" id="Q55505"/>
<dbReference type="Proteomes" id="UP000001425">
    <property type="component" value="Chromosome"/>
</dbReference>
<dbReference type="GO" id="GO:0005737">
    <property type="term" value="C:cytoplasm"/>
    <property type="evidence" value="ECO:0000318"/>
    <property type="project" value="GO_Central"/>
</dbReference>
<dbReference type="GO" id="GO:0005524">
    <property type="term" value="F:ATP binding"/>
    <property type="evidence" value="ECO:0007669"/>
    <property type="project" value="InterPro"/>
</dbReference>
<dbReference type="GO" id="GO:0031072">
    <property type="term" value="F:heat shock protein binding"/>
    <property type="evidence" value="ECO:0007669"/>
    <property type="project" value="InterPro"/>
</dbReference>
<dbReference type="GO" id="GO:0051082">
    <property type="term" value="F:unfolded protein binding"/>
    <property type="evidence" value="ECO:0000318"/>
    <property type="project" value="GO_Central"/>
</dbReference>
<dbReference type="GO" id="GO:0008270">
    <property type="term" value="F:zinc ion binding"/>
    <property type="evidence" value="ECO:0007669"/>
    <property type="project" value="UniProtKB-UniRule"/>
</dbReference>
<dbReference type="GO" id="GO:0051085">
    <property type="term" value="P:chaperone cofactor-dependent protein refolding"/>
    <property type="evidence" value="ECO:0000318"/>
    <property type="project" value="GO_Central"/>
</dbReference>
<dbReference type="GO" id="GO:0006260">
    <property type="term" value="P:DNA replication"/>
    <property type="evidence" value="ECO:0007669"/>
    <property type="project" value="UniProtKB-KW"/>
</dbReference>
<dbReference type="GO" id="GO:0042026">
    <property type="term" value="P:protein refolding"/>
    <property type="evidence" value="ECO:0000318"/>
    <property type="project" value="GO_Central"/>
</dbReference>
<dbReference type="GO" id="GO:0009408">
    <property type="term" value="P:response to heat"/>
    <property type="evidence" value="ECO:0007669"/>
    <property type="project" value="InterPro"/>
</dbReference>
<dbReference type="CDD" id="cd06257">
    <property type="entry name" value="DnaJ"/>
    <property type="match status" value="1"/>
</dbReference>
<dbReference type="CDD" id="cd10747">
    <property type="entry name" value="DnaJ_C"/>
    <property type="match status" value="1"/>
</dbReference>
<dbReference type="CDD" id="cd10719">
    <property type="entry name" value="DnaJ_zf"/>
    <property type="match status" value="1"/>
</dbReference>
<dbReference type="FunFam" id="1.10.287.110:FF:000251">
    <property type="entry name" value="Chaperone protein DnaJ 1"/>
    <property type="match status" value="1"/>
</dbReference>
<dbReference type="FunFam" id="2.60.260.20:FF:000005">
    <property type="entry name" value="Chaperone protein dnaJ 1, mitochondrial"/>
    <property type="match status" value="1"/>
</dbReference>
<dbReference type="FunFam" id="2.10.230.10:FF:000002">
    <property type="entry name" value="Molecular chaperone DnaJ"/>
    <property type="match status" value="1"/>
</dbReference>
<dbReference type="Gene3D" id="1.10.287.110">
    <property type="entry name" value="DnaJ domain"/>
    <property type="match status" value="1"/>
</dbReference>
<dbReference type="Gene3D" id="2.10.230.10">
    <property type="entry name" value="Heat shock protein DnaJ, cysteine-rich domain"/>
    <property type="match status" value="1"/>
</dbReference>
<dbReference type="Gene3D" id="2.60.260.20">
    <property type="entry name" value="Urease metallochaperone UreE, N-terminal domain"/>
    <property type="match status" value="2"/>
</dbReference>
<dbReference type="HAMAP" id="MF_01152">
    <property type="entry name" value="DnaJ"/>
    <property type="match status" value="1"/>
</dbReference>
<dbReference type="InterPro" id="IPR012724">
    <property type="entry name" value="DnaJ"/>
</dbReference>
<dbReference type="InterPro" id="IPR002939">
    <property type="entry name" value="DnaJ_C"/>
</dbReference>
<dbReference type="InterPro" id="IPR001623">
    <property type="entry name" value="DnaJ_domain"/>
</dbReference>
<dbReference type="InterPro" id="IPR008971">
    <property type="entry name" value="HSP40/DnaJ_pept-bd"/>
</dbReference>
<dbReference type="InterPro" id="IPR001305">
    <property type="entry name" value="HSP_DnaJ_Cys-rich_dom"/>
</dbReference>
<dbReference type="InterPro" id="IPR036410">
    <property type="entry name" value="HSP_DnaJ_Cys-rich_dom_sf"/>
</dbReference>
<dbReference type="InterPro" id="IPR036869">
    <property type="entry name" value="J_dom_sf"/>
</dbReference>
<dbReference type="NCBIfam" id="TIGR02349">
    <property type="entry name" value="DnaJ_bact"/>
    <property type="match status" value="1"/>
</dbReference>
<dbReference type="NCBIfam" id="NF008035">
    <property type="entry name" value="PRK10767.1"/>
    <property type="match status" value="1"/>
</dbReference>
<dbReference type="NCBIfam" id="NF010886">
    <property type="entry name" value="PRK14293.1"/>
    <property type="match status" value="1"/>
</dbReference>
<dbReference type="PANTHER" id="PTHR43096:SF10">
    <property type="entry name" value="CHAPERONE PROTEIN DNAJ A6, CHLOROPLASTIC"/>
    <property type="match status" value="1"/>
</dbReference>
<dbReference type="PANTHER" id="PTHR43096">
    <property type="entry name" value="DNAJ HOMOLOG 1, MITOCHONDRIAL-RELATED"/>
    <property type="match status" value="1"/>
</dbReference>
<dbReference type="Pfam" id="PF00226">
    <property type="entry name" value="DnaJ"/>
    <property type="match status" value="1"/>
</dbReference>
<dbReference type="Pfam" id="PF01556">
    <property type="entry name" value="DnaJ_C"/>
    <property type="match status" value="1"/>
</dbReference>
<dbReference type="Pfam" id="PF00684">
    <property type="entry name" value="DnaJ_CXXCXGXG"/>
    <property type="match status" value="1"/>
</dbReference>
<dbReference type="PRINTS" id="PR00625">
    <property type="entry name" value="JDOMAIN"/>
</dbReference>
<dbReference type="SMART" id="SM00271">
    <property type="entry name" value="DnaJ"/>
    <property type="match status" value="1"/>
</dbReference>
<dbReference type="SUPFAM" id="SSF46565">
    <property type="entry name" value="Chaperone J-domain"/>
    <property type="match status" value="1"/>
</dbReference>
<dbReference type="SUPFAM" id="SSF57938">
    <property type="entry name" value="DnaJ/Hsp40 cysteine-rich domain"/>
    <property type="match status" value="1"/>
</dbReference>
<dbReference type="SUPFAM" id="SSF49493">
    <property type="entry name" value="HSP40/DnaJ peptide-binding domain"/>
    <property type="match status" value="2"/>
</dbReference>
<dbReference type="PROSITE" id="PS50076">
    <property type="entry name" value="DNAJ_2"/>
    <property type="match status" value="1"/>
</dbReference>
<dbReference type="PROSITE" id="PS51188">
    <property type="entry name" value="ZF_CR"/>
    <property type="match status" value="1"/>
</dbReference>
<keyword id="KW-0143">Chaperone</keyword>
<keyword id="KW-0963">Cytoplasm</keyword>
<keyword id="KW-0235">DNA replication</keyword>
<keyword id="KW-0479">Metal-binding</keyword>
<keyword id="KW-1185">Reference proteome</keyword>
<keyword id="KW-0677">Repeat</keyword>
<keyword id="KW-0346">Stress response</keyword>
<keyword id="KW-0862">Zinc</keyword>
<keyword id="KW-0863">Zinc-finger</keyword>